<accession>Q13YL3</accession>
<name>RCOM1_PARXL</name>
<proteinExistence type="evidence at protein level"/>
<dbReference type="EMBL" id="CP000270">
    <property type="protein sequence ID" value="ABE30826.1"/>
    <property type="molecule type" value="Genomic_DNA"/>
</dbReference>
<dbReference type="RefSeq" id="WP_011488440.1">
    <property type="nucleotide sequence ID" value="NC_007951.1"/>
</dbReference>
<dbReference type="SMR" id="Q13YL3"/>
<dbReference type="STRING" id="266265.Bxe_A2142"/>
<dbReference type="KEGG" id="bxb:DR64_4297"/>
<dbReference type="KEGG" id="bxe:Bxe_A2142"/>
<dbReference type="PATRIC" id="fig|266265.5.peg.2393"/>
<dbReference type="eggNOG" id="COG3279">
    <property type="taxonomic scope" value="Bacteria"/>
</dbReference>
<dbReference type="eggNOG" id="COG5000">
    <property type="taxonomic scope" value="Bacteria"/>
</dbReference>
<dbReference type="OrthoDB" id="9781059at2"/>
<dbReference type="Proteomes" id="UP000001817">
    <property type="component" value="Chromosome 1"/>
</dbReference>
<dbReference type="GO" id="GO:0005737">
    <property type="term" value="C:cytoplasm"/>
    <property type="evidence" value="ECO:0007669"/>
    <property type="project" value="UniProtKB-SubCell"/>
</dbReference>
<dbReference type="GO" id="GO:0003677">
    <property type="term" value="F:DNA binding"/>
    <property type="evidence" value="ECO:0007669"/>
    <property type="project" value="UniProtKB-KW"/>
</dbReference>
<dbReference type="GO" id="GO:0046872">
    <property type="term" value="F:metal ion binding"/>
    <property type="evidence" value="ECO:0007669"/>
    <property type="project" value="UniProtKB-KW"/>
</dbReference>
<dbReference type="GO" id="GO:0000156">
    <property type="term" value="F:phosphorelay response regulator activity"/>
    <property type="evidence" value="ECO:0007669"/>
    <property type="project" value="InterPro"/>
</dbReference>
<dbReference type="Gene3D" id="2.40.50.1020">
    <property type="entry name" value="LytTr DNA-binding domain"/>
    <property type="match status" value="1"/>
</dbReference>
<dbReference type="Gene3D" id="3.30.450.20">
    <property type="entry name" value="PAS domain"/>
    <property type="match status" value="1"/>
</dbReference>
<dbReference type="InterPro" id="IPR046947">
    <property type="entry name" value="LytR-like"/>
</dbReference>
<dbReference type="InterPro" id="IPR007492">
    <property type="entry name" value="LytTR_DNA-bd_dom"/>
</dbReference>
<dbReference type="InterPro" id="IPR000014">
    <property type="entry name" value="PAS"/>
</dbReference>
<dbReference type="InterPro" id="IPR035965">
    <property type="entry name" value="PAS-like_dom_sf"/>
</dbReference>
<dbReference type="PANTHER" id="PTHR37299:SF1">
    <property type="entry name" value="STAGE 0 SPORULATION PROTEIN A HOMOLOG"/>
    <property type="match status" value="1"/>
</dbReference>
<dbReference type="PANTHER" id="PTHR37299">
    <property type="entry name" value="TRANSCRIPTIONAL REGULATOR-RELATED"/>
    <property type="match status" value="1"/>
</dbReference>
<dbReference type="Pfam" id="PF04397">
    <property type="entry name" value="LytTR"/>
    <property type="match status" value="1"/>
</dbReference>
<dbReference type="SMART" id="SM00850">
    <property type="entry name" value="LytTR"/>
    <property type="match status" value="1"/>
</dbReference>
<dbReference type="SUPFAM" id="SSF55785">
    <property type="entry name" value="PYP-like sensor domain (PAS domain)"/>
    <property type="match status" value="1"/>
</dbReference>
<dbReference type="PROSITE" id="PS50930">
    <property type="entry name" value="HTH_LYTTR"/>
    <property type="match status" value="1"/>
</dbReference>
<dbReference type="PROSITE" id="PS50112">
    <property type="entry name" value="PAS"/>
    <property type="match status" value="1"/>
</dbReference>
<feature type="chain" id="PRO_0000352733" description="Heme-containing CO-sensing transcriptional regulator RcoM 1">
    <location>
        <begin position="1"/>
        <end position="267"/>
    </location>
</feature>
<feature type="domain" description="PAS" evidence="2">
    <location>
        <begin position="15"/>
        <end position="86"/>
    </location>
</feature>
<feature type="domain" description="HTH LytTR-type" evidence="1">
    <location>
        <begin position="161"/>
        <end position="266"/>
    </location>
</feature>
<feature type="binding site" description="axial binding residue">
    <location>
        <position position="74"/>
    </location>
    <ligand>
        <name>heme</name>
        <dbReference type="ChEBI" id="CHEBI:30413"/>
    </ligand>
    <ligandPart>
        <name>Fe</name>
        <dbReference type="ChEBI" id="CHEBI:18248"/>
    </ligandPart>
</feature>
<feature type="binding site" description="axial binding residue">
    <location>
        <position position="104"/>
    </location>
    <ligand>
        <name>heme</name>
        <dbReference type="ChEBI" id="CHEBI:30413"/>
    </ligand>
    <ligandPart>
        <name>Fe</name>
        <dbReference type="ChEBI" id="CHEBI:18248"/>
    </ligandPart>
</feature>
<feature type="mutagenesis site" description="Loss of activity." evidence="3">
    <original>H</original>
    <variation>A</variation>
    <location>
        <position position="74"/>
    </location>
</feature>
<feature type="mutagenesis site" description="Loss of ability to bind heme. Loss of activity." evidence="3">
    <original>H</original>
    <variation>K</variation>
    <location>
        <position position="74"/>
    </location>
</feature>
<feature type="mutagenesis site" description="Loss of ability to bind heme. Loss of ability to respond to CO, presenting constitutive activity." evidence="3">
    <original>H</original>
    <variation>Y</variation>
    <location>
        <position position="74"/>
    </location>
</feature>
<feature type="mutagenesis site" description="Slower binding of CO." evidence="3">
    <original>M</original>
    <variation>K</variation>
    <location>
        <position position="104"/>
    </location>
</feature>
<feature type="mutagenesis site" description="Much higher affinity for CO. Loss of activity. No effect on heme incorporation." evidence="3">
    <original>M</original>
    <variation>L</variation>
    <location>
        <position position="104"/>
    </location>
</feature>
<feature type="mutagenesis site" description="No effect." evidence="3">
    <original>M</original>
    <variation>L</variation>
    <location>
        <position position="105"/>
    </location>
</feature>
<feature type="mutagenesis site" description="Loss of activity." evidence="3">
    <original>H</original>
    <variation>A</variation>
    <location>
        <position position="218"/>
    </location>
</feature>
<comment type="function">
    <text evidence="3">One-component, b-type heme-containing aerobic sensor and transcriptional regulator that responds to CO by activating the expression of the oxidation operon cox.</text>
</comment>
<comment type="cofactor">
    <cofactor>
        <name>heme</name>
        <dbReference type="ChEBI" id="CHEBI:30413"/>
    </cofactor>
    <text>Binds 1 heme group per subunit.</text>
</comment>
<comment type="subcellular location">
    <subcellularLocation>
        <location evidence="4">Cytoplasm</location>
    </subcellularLocation>
</comment>
<comment type="domain">
    <text>The N-terminal sensor (heme-containing) domain is covalently linked to the C-terminal, DNA-binding response domain.</text>
</comment>
<comment type="domain">
    <text>Binding of an external ligand to the heme located in the N-terminal sensory domain displaces the Met-104 distal heme ligand, triggering a conformational change that activates the C-terminal DNA-binding domain.</text>
</comment>
<comment type="miscellaneous">
    <text>This protein undergoes a ligand switch upon reduction; the heme distal ligand is coordinated by a Cys residue in the inactive Fe(3+) (ferric) form, by Met-104 in the inactive Fe(2+) (ferrous) form, and by CO in the CO-bound active form.</text>
</comment>
<protein>
    <recommendedName>
        <fullName>Heme-containing CO-sensing transcriptional regulator RcoM 1</fullName>
    </recommendedName>
    <alternativeName>
        <fullName>Regulator of CO metabolism 1</fullName>
        <shortName>RCOM-1</shortName>
    </alternativeName>
</protein>
<evidence type="ECO:0000255" key="1">
    <source>
        <dbReference type="PROSITE-ProRule" id="PRU00112"/>
    </source>
</evidence>
<evidence type="ECO:0000255" key="2">
    <source>
        <dbReference type="PROSITE-ProRule" id="PRU00140"/>
    </source>
</evidence>
<evidence type="ECO:0000269" key="3">
    <source>
    </source>
</evidence>
<evidence type="ECO:0000305" key="4"/>
<organism>
    <name type="scientific">Paraburkholderia xenovorans (strain LB400)</name>
    <dbReference type="NCBI Taxonomy" id="266265"/>
    <lineage>
        <taxon>Bacteria</taxon>
        <taxon>Pseudomonadati</taxon>
        <taxon>Pseudomonadota</taxon>
        <taxon>Betaproteobacteria</taxon>
        <taxon>Burkholderiales</taxon>
        <taxon>Burkholderiaceae</taxon>
        <taxon>Paraburkholderia</taxon>
    </lineage>
</organism>
<gene>
    <name type="primary">rcoM1</name>
    <name type="ordered locus">Bxeno_A2288</name>
    <name type="ORF">Bxe_A2142</name>
</gene>
<sequence length="267" mass="29451">MKSSEPASVSAAERRAETFQHKLEQFNPGIVWLDQHGRVTAFNDVALQILGPAGEQSLGVAQDSLFGIDVVQLHPEKSRDKLRFLLQSKDVGGCPVKSPPPVAMMINIPDRILMIKVSSMIAAGGACGTCMIFYDVTDLTTEPSGLPAGGSAPSPRRLFKIPVYRKNRVILLDLKDIVRFQGDGHYTTIVTRDDRYLSNLSLADLELRLDSSIYLRVHRSHIVSLQYAVELVKLDESVNLVMDDAEQTQVPVSRSRTAQLKELLGVV</sequence>
<keyword id="KW-0010">Activator</keyword>
<keyword id="KW-0963">Cytoplasm</keyword>
<keyword id="KW-0238">DNA-binding</keyword>
<keyword id="KW-0349">Heme</keyword>
<keyword id="KW-0408">Iron</keyword>
<keyword id="KW-0479">Metal-binding</keyword>
<keyword id="KW-1185">Reference proteome</keyword>
<keyword id="KW-0677">Repeat</keyword>
<keyword id="KW-0804">Transcription</keyword>
<keyword id="KW-0805">Transcription regulation</keyword>
<reference key="1">
    <citation type="journal article" date="2006" name="Proc. Natl. Acad. Sci. U.S.A.">
        <title>Burkholderia xenovorans LB400 harbors a multi-replicon, 9.73-Mbp genome shaped for versatility.</title>
        <authorList>
            <person name="Chain P.S.G."/>
            <person name="Denef V.J."/>
            <person name="Konstantinidis K.T."/>
            <person name="Vergez L.M."/>
            <person name="Agullo L."/>
            <person name="Reyes V.L."/>
            <person name="Hauser L."/>
            <person name="Cordova M."/>
            <person name="Gomez L."/>
            <person name="Gonzalez M."/>
            <person name="Land M."/>
            <person name="Lao V."/>
            <person name="Larimer F."/>
            <person name="LiPuma J.J."/>
            <person name="Mahenthiralingam E."/>
            <person name="Malfatti S.A."/>
            <person name="Marx C.J."/>
            <person name="Parnell J.J."/>
            <person name="Ramette A."/>
            <person name="Richardson P."/>
            <person name="Seeger M."/>
            <person name="Smith D."/>
            <person name="Spilker T."/>
            <person name="Sul W.J."/>
            <person name="Tsoi T.V."/>
            <person name="Ulrich L.E."/>
            <person name="Zhulin I.B."/>
            <person name="Tiedje J.M."/>
        </authorList>
    </citation>
    <scope>NUCLEOTIDE SEQUENCE [LARGE SCALE GENOMIC DNA]</scope>
    <source>
        <strain>LB400</strain>
    </source>
</reference>
<reference key="2">
    <citation type="journal article" date="2008" name="J. Bacteriol.">
        <title>RcoM: a new single-component transcriptional regulator of CO metabolism in bacteria.</title>
        <authorList>
            <person name="Kerby R.L."/>
            <person name="Youn H."/>
            <person name="Roberts G.P."/>
        </authorList>
    </citation>
    <scope>FUNCTION IN REGULATION OF AEROBIC CO OXIDATION</scope>
    <scope>HEME COFACTOR</scope>
    <scope>MUTAGENESIS OF HIS-74; MET-104; MET-105 AND HIS-218</scope>
</reference>